<keyword id="KW-0479">Metal-binding</keyword>
<keyword id="KW-0687">Ribonucleoprotein</keyword>
<keyword id="KW-0689">Ribosomal protein</keyword>
<keyword id="KW-0694">RNA-binding</keyword>
<keyword id="KW-0699">rRNA-binding</keyword>
<keyword id="KW-0862">Zinc</keyword>
<gene>
    <name evidence="1" type="primary">rpmE</name>
    <name type="ordered locus">SSPA3666</name>
</gene>
<feature type="chain" id="PRO_1000126722" description="Large ribosomal subunit protein bL31">
    <location>
        <begin position="1"/>
        <end position="70"/>
    </location>
</feature>
<feature type="binding site" evidence="1">
    <location>
        <position position="16"/>
    </location>
    <ligand>
        <name>Zn(2+)</name>
        <dbReference type="ChEBI" id="CHEBI:29105"/>
    </ligand>
</feature>
<feature type="binding site" evidence="1">
    <location>
        <position position="18"/>
    </location>
    <ligand>
        <name>Zn(2+)</name>
        <dbReference type="ChEBI" id="CHEBI:29105"/>
    </ligand>
</feature>
<feature type="binding site" evidence="1">
    <location>
        <position position="37"/>
    </location>
    <ligand>
        <name>Zn(2+)</name>
        <dbReference type="ChEBI" id="CHEBI:29105"/>
    </ligand>
</feature>
<feature type="binding site" evidence="1">
    <location>
        <position position="40"/>
    </location>
    <ligand>
        <name>Zn(2+)</name>
        <dbReference type="ChEBI" id="CHEBI:29105"/>
    </ligand>
</feature>
<name>RL31_SALPK</name>
<reference key="1">
    <citation type="journal article" date="2009" name="BMC Genomics">
        <title>Pseudogene accumulation in the evolutionary histories of Salmonella enterica serovars Paratyphi A and Typhi.</title>
        <authorList>
            <person name="Holt K.E."/>
            <person name="Thomson N.R."/>
            <person name="Wain J."/>
            <person name="Langridge G.C."/>
            <person name="Hasan R."/>
            <person name="Bhutta Z.A."/>
            <person name="Quail M.A."/>
            <person name="Norbertczak H."/>
            <person name="Walker D."/>
            <person name="Simmonds M."/>
            <person name="White B."/>
            <person name="Bason N."/>
            <person name="Mungall K."/>
            <person name="Dougan G."/>
            <person name="Parkhill J."/>
        </authorList>
    </citation>
    <scope>NUCLEOTIDE SEQUENCE [LARGE SCALE GENOMIC DNA]</scope>
    <source>
        <strain>AKU_12601</strain>
    </source>
</reference>
<dbReference type="EMBL" id="FM200053">
    <property type="protein sequence ID" value="CAR61948.1"/>
    <property type="molecule type" value="Genomic_DNA"/>
</dbReference>
<dbReference type="RefSeq" id="WP_000715284.1">
    <property type="nucleotide sequence ID" value="NC_011147.1"/>
</dbReference>
<dbReference type="SMR" id="B5BJL3"/>
<dbReference type="GeneID" id="66758349"/>
<dbReference type="KEGG" id="sek:SSPA3666"/>
<dbReference type="HOGENOM" id="CLU_114306_4_3_6"/>
<dbReference type="Proteomes" id="UP000001869">
    <property type="component" value="Chromosome"/>
</dbReference>
<dbReference type="GO" id="GO:1990904">
    <property type="term" value="C:ribonucleoprotein complex"/>
    <property type="evidence" value="ECO:0007669"/>
    <property type="project" value="UniProtKB-KW"/>
</dbReference>
<dbReference type="GO" id="GO:0005840">
    <property type="term" value="C:ribosome"/>
    <property type="evidence" value="ECO:0007669"/>
    <property type="project" value="UniProtKB-KW"/>
</dbReference>
<dbReference type="GO" id="GO:0046872">
    <property type="term" value="F:metal ion binding"/>
    <property type="evidence" value="ECO:0007669"/>
    <property type="project" value="UniProtKB-KW"/>
</dbReference>
<dbReference type="GO" id="GO:0019843">
    <property type="term" value="F:rRNA binding"/>
    <property type="evidence" value="ECO:0007669"/>
    <property type="project" value="UniProtKB-KW"/>
</dbReference>
<dbReference type="GO" id="GO:0003735">
    <property type="term" value="F:structural constituent of ribosome"/>
    <property type="evidence" value="ECO:0007669"/>
    <property type="project" value="InterPro"/>
</dbReference>
<dbReference type="GO" id="GO:0006412">
    <property type="term" value="P:translation"/>
    <property type="evidence" value="ECO:0007669"/>
    <property type="project" value="UniProtKB-UniRule"/>
</dbReference>
<dbReference type="FunFam" id="4.10.830.30:FF:000001">
    <property type="entry name" value="50S ribosomal protein L31"/>
    <property type="match status" value="1"/>
</dbReference>
<dbReference type="Gene3D" id="4.10.830.30">
    <property type="entry name" value="Ribosomal protein L31"/>
    <property type="match status" value="1"/>
</dbReference>
<dbReference type="HAMAP" id="MF_00501">
    <property type="entry name" value="Ribosomal_bL31_1"/>
    <property type="match status" value="1"/>
</dbReference>
<dbReference type="InterPro" id="IPR034704">
    <property type="entry name" value="Ribosomal_bL28/bL31-like_sf"/>
</dbReference>
<dbReference type="InterPro" id="IPR002150">
    <property type="entry name" value="Ribosomal_bL31"/>
</dbReference>
<dbReference type="InterPro" id="IPR027491">
    <property type="entry name" value="Ribosomal_bL31_A"/>
</dbReference>
<dbReference type="InterPro" id="IPR042105">
    <property type="entry name" value="Ribosomal_bL31_sf"/>
</dbReference>
<dbReference type="NCBIfam" id="TIGR00105">
    <property type="entry name" value="L31"/>
    <property type="match status" value="1"/>
</dbReference>
<dbReference type="NCBIfam" id="NF000612">
    <property type="entry name" value="PRK00019.1"/>
    <property type="match status" value="1"/>
</dbReference>
<dbReference type="NCBIfam" id="NF001809">
    <property type="entry name" value="PRK00528.1"/>
    <property type="match status" value="1"/>
</dbReference>
<dbReference type="PANTHER" id="PTHR33280">
    <property type="entry name" value="50S RIBOSOMAL PROTEIN L31, CHLOROPLASTIC"/>
    <property type="match status" value="1"/>
</dbReference>
<dbReference type="PANTHER" id="PTHR33280:SF6">
    <property type="entry name" value="LARGE RIBOSOMAL SUBUNIT PROTEIN BL31A"/>
    <property type="match status" value="1"/>
</dbReference>
<dbReference type="Pfam" id="PF01197">
    <property type="entry name" value="Ribosomal_L31"/>
    <property type="match status" value="1"/>
</dbReference>
<dbReference type="PRINTS" id="PR01249">
    <property type="entry name" value="RIBOSOMALL31"/>
</dbReference>
<dbReference type="SUPFAM" id="SSF143800">
    <property type="entry name" value="L28p-like"/>
    <property type="match status" value="1"/>
</dbReference>
<dbReference type="PROSITE" id="PS01143">
    <property type="entry name" value="RIBOSOMAL_L31"/>
    <property type="match status" value="1"/>
</dbReference>
<evidence type="ECO:0000255" key="1">
    <source>
        <dbReference type="HAMAP-Rule" id="MF_00501"/>
    </source>
</evidence>
<evidence type="ECO:0000305" key="2"/>
<organism>
    <name type="scientific">Salmonella paratyphi A (strain AKU_12601)</name>
    <dbReference type="NCBI Taxonomy" id="554290"/>
    <lineage>
        <taxon>Bacteria</taxon>
        <taxon>Pseudomonadati</taxon>
        <taxon>Pseudomonadota</taxon>
        <taxon>Gammaproteobacteria</taxon>
        <taxon>Enterobacterales</taxon>
        <taxon>Enterobacteriaceae</taxon>
        <taxon>Salmonella</taxon>
    </lineage>
</organism>
<proteinExistence type="inferred from homology"/>
<protein>
    <recommendedName>
        <fullName evidence="1">Large ribosomal subunit protein bL31</fullName>
    </recommendedName>
    <alternativeName>
        <fullName evidence="2">50S ribosomal protein L31</fullName>
    </alternativeName>
</protein>
<accession>B5BJL3</accession>
<comment type="function">
    <text evidence="1">Binds the 23S rRNA.</text>
</comment>
<comment type="cofactor">
    <cofactor evidence="1">
        <name>Zn(2+)</name>
        <dbReference type="ChEBI" id="CHEBI:29105"/>
    </cofactor>
    <text evidence="1">Binds 1 zinc ion per subunit.</text>
</comment>
<comment type="subunit">
    <text evidence="1">Part of the 50S ribosomal subunit.</text>
</comment>
<comment type="similarity">
    <text evidence="1">Belongs to the bacterial ribosomal protein bL31 family. Type A subfamily.</text>
</comment>
<sequence length="70" mass="7719">MKKGIHPNYVEITATCSCGNVIKTHSTVGHDLNLDVCGKCHPFFTGKQRVVDTGGRVERFNKRFSIPGSK</sequence>